<name>RS21_ACIAD</name>
<dbReference type="EMBL" id="CR543861">
    <property type="protein sequence ID" value="CAG68200.1"/>
    <property type="molecule type" value="Genomic_DNA"/>
</dbReference>
<dbReference type="RefSeq" id="WP_001136722.1">
    <property type="nucleotide sequence ID" value="NC_005966.1"/>
</dbReference>
<dbReference type="SMR" id="Q6FCL0"/>
<dbReference type="STRING" id="202950.GCA_001485005_01087"/>
<dbReference type="GeneID" id="97425938"/>
<dbReference type="KEGG" id="aci:ACIAD1331"/>
<dbReference type="eggNOG" id="COG0828">
    <property type="taxonomic scope" value="Bacteria"/>
</dbReference>
<dbReference type="HOGENOM" id="CLU_159258_1_0_6"/>
<dbReference type="OrthoDB" id="9799244at2"/>
<dbReference type="BioCyc" id="ASP62977:ACIAD_RS06115-MONOMER"/>
<dbReference type="Proteomes" id="UP000000430">
    <property type="component" value="Chromosome"/>
</dbReference>
<dbReference type="GO" id="GO:1990904">
    <property type="term" value="C:ribonucleoprotein complex"/>
    <property type="evidence" value="ECO:0007669"/>
    <property type="project" value="UniProtKB-KW"/>
</dbReference>
<dbReference type="GO" id="GO:0005840">
    <property type="term" value="C:ribosome"/>
    <property type="evidence" value="ECO:0007669"/>
    <property type="project" value="UniProtKB-KW"/>
</dbReference>
<dbReference type="GO" id="GO:0003735">
    <property type="term" value="F:structural constituent of ribosome"/>
    <property type="evidence" value="ECO:0007669"/>
    <property type="project" value="InterPro"/>
</dbReference>
<dbReference type="GO" id="GO:0006412">
    <property type="term" value="P:translation"/>
    <property type="evidence" value="ECO:0007669"/>
    <property type="project" value="UniProtKB-UniRule"/>
</dbReference>
<dbReference type="Gene3D" id="1.20.5.1150">
    <property type="entry name" value="Ribosomal protein S8"/>
    <property type="match status" value="1"/>
</dbReference>
<dbReference type="HAMAP" id="MF_00358">
    <property type="entry name" value="Ribosomal_bS21"/>
    <property type="match status" value="1"/>
</dbReference>
<dbReference type="InterPro" id="IPR001911">
    <property type="entry name" value="Ribosomal_bS21"/>
</dbReference>
<dbReference type="InterPro" id="IPR018278">
    <property type="entry name" value="Ribosomal_bS21_CS"/>
</dbReference>
<dbReference type="InterPro" id="IPR038380">
    <property type="entry name" value="Ribosomal_bS21_sf"/>
</dbReference>
<dbReference type="NCBIfam" id="TIGR00030">
    <property type="entry name" value="S21p"/>
    <property type="match status" value="1"/>
</dbReference>
<dbReference type="PANTHER" id="PTHR21109">
    <property type="entry name" value="MITOCHONDRIAL 28S RIBOSOMAL PROTEIN S21"/>
    <property type="match status" value="1"/>
</dbReference>
<dbReference type="PANTHER" id="PTHR21109:SF22">
    <property type="entry name" value="SMALL RIBOSOMAL SUBUNIT PROTEIN BS21"/>
    <property type="match status" value="1"/>
</dbReference>
<dbReference type="Pfam" id="PF01165">
    <property type="entry name" value="Ribosomal_S21"/>
    <property type="match status" value="1"/>
</dbReference>
<dbReference type="PRINTS" id="PR00976">
    <property type="entry name" value="RIBOSOMALS21"/>
</dbReference>
<dbReference type="PROSITE" id="PS01181">
    <property type="entry name" value="RIBOSOMAL_S21"/>
    <property type="match status" value="1"/>
</dbReference>
<feature type="chain" id="PRO_0000178282" description="Small ribosomal subunit protein bS21">
    <location>
        <begin position="1"/>
        <end position="71"/>
    </location>
</feature>
<gene>
    <name evidence="1" type="primary">rpsU</name>
    <name type="ordered locus">ACIAD1331</name>
</gene>
<comment type="similarity">
    <text evidence="1">Belongs to the bacterial ribosomal protein bS21 family.</text>
</comment>
<protein>
    <recommendedName>
        <fullName evidence="1">Small ribosomal subunit protein bS21</fullName>
    </recommendedName>
    <alternativeName>
        <fullName evidence="2">30S ribosomal protein S21</fullName>
    </alternativeName>
</protein>
<reference key="1">
    <citation type="journal article" date="2004" name="Nucleic Acids Res.">
        <title>Unique features revealed by the genome sequence of Acinetobacter sp. ADP1, a versatile and naturally transformation competent bacterium.</title>
        <authorList>
            <person name="Barbe V."/>
            <person name="Vallenet D."/>
            <person name="Fonknechten N."/>
            <person name="Kreimeyer A."/>
            <person name="Oztas S."/>
            <person name="Labarre L."/>
            <person name="Cruveiller S."/>
            <person name="Robert C."/>
            <person name="Duprat S."/>
            <person name="Wincker P."/>
            <person name="Ornston L.N."/>
            <person name="Weissenbach J."/>
            <person name="Marliere P."/>
            <person name="Cohen G.N."/>
            <person name="Medigue C."/>
        </authorList>
    </citation>
    <scope>NUCLEOTIDE SEQUENCE [LARGE SCALE GENOMIC DNA]</scope>
    <source>
        <strain>ATCC 33305 / BD413 / ADP1</strain>
    </source>
</reference>
<organism>
    <name type="scientific">Acinetobacter baylyi (strain ATCC 33305 / BD413 / ADP1)</name>
    <dbReference type="NCBI Taxonomy" id="62977"/>
    <lineage>
        <taxon>Bacteria</taxon>
        <taxon>Pseudomonadati</taxon>
        <taxon>Pseudomonadota</taxon>
        <taxon>Gammaproteobacteria</taxon>
        <taxon>Moraxellales</taxon>
        <taxon>Moraxellaceae</taxon>
        <taxon>Acinetobacter</taxon>
    </lineage>
</organism>
<sequence length="71" mass="8451">MPQVKLKEGEPVDVAIRRFKRSCEKAGVLADVRKREFYEKPTQERKRKKAAAVKRYQKKLARESVRTTRLY</sequence>
<evidence type="ECO:0000255" key="1">
    <source>
        <dbReference type="HAMAP-Rule" id="MF_00358"/>
    </source>
</evidence>
<evidence type="ECO:0000305" key="2"/>
<keyword id="KW-0687">Ribonucleoprotein</keyword>
<keyword id="KW-0689">Ribosomal protein</keyword>
<proteinExistence type="inferred from homology"/>
<accession>Q6FCL0</accession>